<organism>
    <name type="scientific">Pseudomonas aeruginosa (strain ATCC 15692 / DSM 22644 / CIP 104116 / JCM 14847 / LMG 12228 / 1C / PRS 101 / PAO1)</name>
    <dbReference type="NCBI Taxonomy" id="208964"/>
    <lineage>
        <taxon>Bacteria</taxon>
        <taxon>Pseudomonadati</taxon>
        <taxon>Pseudomonadota</taxon>
        <taxon>Gammaproteobacteria</taxon>
        <taxon>Pseudomonadales</taxon>
        <taxon>Pseudomonadaceae</taxon>
        <taxon>Pseudomonas</taxon>
    </lineage>
</organism>
<comment type="function">
    <text evidence="1">Heme-dependent dioxygenase that catalyzes the oxidative cleavage of the L-tryptophan (L-Trp) pyrrole ring and converts L-tryptophan to N-formyl-L-kynurenine. Catalyzes the oxidative cleavage of the indole moiety.</text>
</comment>
<comment type="catalytic activity">
    <reaction evidence="1">
        <text>L-tryptophan + O2 = N-formyl-L-kynurenine</text>
        <dbReference type="Rhea" id="RHEA:24536"/>
        <dbReference type="ChEBI" id="CHEBI:15379"/>
        <dbReference type="ChEBI" id="CHEBI:57912"/>
        <dbReference type="ChEBI" id="CHEBI:58629"/>
        <dbReference type="EC" id="1.13.11.11"/>
    </reaction>
</comment>
<comment type="cofactor">
    <cofactor evidence="1">
        <name>heme</name>
        <dbReference type="ChEBI" id="CHEBI:30413"/>
    </cofactor>
    <text evidence="1">Binds 1 heme group per subunit.</text>
</comment>
<comment type="pathway">
    <text evidence="1">Amino-acid degradation; L-tryptophan degradation via kynurenine pathway; L-kynurenine from L-tryptophan: step 1/2.</text>
</comment>
<comment type="subunit">
    <text evidence="1">Homotetramer.</text>
</comment>
<comment type="similarity">
    <text evidence="1">Belongs to the tryptophan 2,3-dioxygenase family.</text>
</comment>
<feature type="chain" id="PRO_0000360124" description="Tryptophan 2,3-dioxygenase">
    <location>
        <begin position="1"/>
        <end position="288"/>
    </location>
</feature>
<feature type="binding site" evidence="1">
    <location>
        <begin position="57"/>
        <end position="61"/>
    </location>
    <ligand>
        <name>substrate</name>
    </ligand>
</feature>
<feature type="binding site" evidence="1">
    <location>
        <position position="119"/>
    </location>
    <ligand>
        <name>substrate</name>
    </ligand>
</feature>
<feature type="binding site" evidence="1">
    <location>
        <position position="123"/>
    </location>
    <ligand>
        <name>substrate</name>
    </ligand>
</feature>
<feature type="binding site" description="axial binding residue" evidence="1">
    <location>
        <position position="246"/>
    </location>
    <ligand>
        <name>heme</name>
        <dbReference type="ChEBI" id="CHEBI:30413"/>
    </ligand>
    <ligandPart>
        <name>Fe</name>
        <dbReference type="ChEBI" id="CHEBI:18248"/>
    </ligandPart>
</feature>
<feature type="binding site" evidence="1">
    <location>
        <position position="260"/>
    </location>
    <ligand>
        <name>substrate</name>
    </ligand>
</feature>
<gene>
    <name evidence="1" type="primary">kynA</name>
    <name type="ordered locus">PA2579</name>
</gene>
<accession>Q9I0Q7</accession>
<name>T23O_PSEAE</name>
<dbReference type="EC" id="1.13.11.11" evidence="1"/>
<dbReference type="EMBL" id="AE004091">
    <property type="protein sequence ID" value="AAG05967.1"/>
    <property type="molecule type" value="Genomic_DNA"/>
</dbReference>
<dbReference type="PIR" id="E83323">
    <property type="entry name" value="E83323"/>
</dbReference>
<dbReference type="RefSeq" id="NP_251269.1">
    <property type="nucleotide sequence ID" value="NC_002516.2"/>
</dbReference>
<dbReference type="RefSeq" id="WP_003120044.1">
    <property type="nucleotide sequence ID" value="NZ_QZGE01000008.1"/>
</dbReference>
<dbReference type="SMR" id="Q9I0Q7"/>
<dbReference type="STRING" id="208964.PA2579"/>
<dbReference type="PaxDb" id="208964-PA2579"/>
<dbReference type="DNASU" id="879140"/>
<dbReference type="GeneID" id="879140"/>
<dbReference type="KEGG" id="pae:PA2579"/>
<dbReference type="PATRIC" id="fig|208964.12.peg.2699"/>
<dbReference type="PseudoCAP" id="PA2579"/>
<dbReference type="HOGENOM" id="CLU_063240_0_0_6"/>
<dbReference type="InParanoid" id="Q9I0Q7"/>
<dbReference type="OrthoDB" id="9776847at2"/>
<dbReference type="PhylomeDB" id="Q9I0Q7"/>
<dbReference type="BioCyc" id="PAER208964:G1FZ6-2616-MONOMER"/>
<dbReference type="UniPathway" id="UPA00333">
    <property type="reaction ID" value="UER00453"/>
</dbReference>
<dbReference type="Proteomes" id="UP000002438">
    <property type="component" value="Chromosome"/>
</dbReference>
<dbReference type="GO" id="GO:0020037">
    <property type="term" value="F:heme binding"/>
    <property type="evidence" value="ECO:0000250"/>
    <property type="project" value="UniProtKB"/>
</dbReference>
<dbReference type="GO" id="GO:0046872">
    <property type="term" value="F:metal ion binding"/>
    <property type="evidence" value="ECO:0007669"/>
    <property type="project" value="UniProtKB-KW"/>
</dbReference>
<dbReference type="GO" id="GO:0004833">
    <property type="term" value="F:tryptophan 2,3-dioxygenase activity"/>
    <property type="evidence" value="ECO:0000250"/>
    <property type="project" value="UniProtKB"/>
</dbReference>
<dbReference type="GO" id="GO:0019442">
    <property type="term" value="P:L-tryptophan catabolic process to acetyl-CoA"/>
    <property type="evidence" value="ECO:0000318"/>
    <property type="project" value="GO_Central"/>
</dbReference>
<dbReference type="GO" id="GO:0019441">
    <property type="term" value="P:L-tryptophan catabolic process to kynurenine"/>
    <property type="evidence" value="ECO:0000250"/>
    <property type="project" value="UniProtKB"/>
</dbReference>
<dbReference type="FunFam" id="1.20.58.480:FF:000001">
    <property type="entry name" value="Tryptophan 2,3-dioxygenase"/>
    <property type="match status" value="1"/>
</dbReference>
<dbReference type="Gene3D" id="1.20.58.480">
    <property type="match status" value="1"/>
</dbReference>
<dbReference type="HAMAP" id="MF_01972">
    <property type="entry name" value="T23O"/>
    <property type="match status" value="1"/>
</dbReference>
<dbReference type="InterPro" id="IPR037217">
    <property type="entry name" value="Trp/Indoleamine_2_3_dOase-like"/>
</dbReference>
<dbReference type="InterPro" id="IPR017485">
    <property type="entry name" value="Trp_2-3-dOase_bac"/>
</dbReference>
<dbReference type="InterPro" id="IPR004981">
    <property type="entry name" value="Trp_2_3_dOase"/>
</dbReference>
<dbReference type="NCBIfam" id="TIGR03036">
    <property type="entry name" value="trp_2_3_diox"/>
    <property type="match status" value="1"/>
</dbReference>
<dbReference type="PANTHER" id="PTHR10138">
    <property type="entry name" value="TRYPTOPHAN 2,3-DIOXYGENASE"/>
    <property type="match status" value="1"/>
</dbReference>
<dbReference type="PANTHER" id="PTHR10138:SF0">
    <property type="entry name" value="TRYPTOPHAN 2,3-DIOXYGENASE"/>
    <property type="match status" value="1"/>
</dbReference>
<dbReference type="Pfam" id="PF03301">
    <property type="entry name" value="Trp_dioxygenase"/>
    <property type="match status" value="1"/>
</dbReference>
<dbReference type="SUPFAM" id="SSF140959">
    <property type="entry name" value="Indolic compounds 2,3-dioxygenase-like"/>
    <property type="match status" value="1"/>
</dbReference>
<keyword id="KW-0223">Dioxygenase</keyword>
<keyword id="KW-0349">Heme</keyword>
<keyword id="KW-0408">Iron</keyword>
<keyword id="KW-0479">Metal-binding</keyword>
<keyword id="KW-0560">Oxidoreductase</keyword>
<keyword id="KW-1185">Reference proteome</keyword>
<keyword id="KW-0823">Tryptophan catabolism</keyword>
<protein>
    <recommendedName>
        <fullName evidence="1">Tryptophan 2,3-dioxygenase</fullName>
        <shortName evidence="1">TDO</shortName>
        <ecNumber evidence="1">1.13.11.11</ecNumber>
    </recommendedName>
    <alternativeName>
        <fullName evidence="1">Tryptamin 2,3-dioxygenase</fullName>
    </alternativeName>
    <alternativeName>
        <fullName evidence="1">Tryptophan oxygenase</fullName>
        <shortName evidence="1">TO</shortName>
        <shortName evidence="1">TRPO</shortName>
    </alternativeName>
    <alternativeName>
        <fullName evidence="1">Tryptophan pyrrolase</fullName>
    </alternativeName>
    <alternativeName>
        <fullName evidence="1">Tryptophanase</fullName>
    </alternativeName>
</protein>
<sequence>MCPCPHSQAQGETDGEAEWHNAALDFTHAMSYGDYLKLDKVLDAQFPLSPDHNEMLFIIQHQTSELWMKLMLHELRAAREHVKSGKLGPALKMLARVSRIFDQLVHAWAVLATMTPTEYNTIRPYLGQSSGFQSYQYREIEFILGNKNATLLKPHAHRAELLAALEQALHTPSLYDEAIRLMAAQGLPVSQERLARDAAAGTCYEASVEAAWRQVYQAPERYWDLYQLAEKLIDLEDSFRQWRFRHVTTVERIIGFKPGTGGTEGVGYLRSMLDTILFPELWRLRSNL</sequence>
<proteinExistence type="inferred from homology"/>
<evidence type="ECO:0000255" key="1">
    <source>
        <dbReference type="HAMAP-Rule" id="MF_01972"/>
    </source>
</evidence>
<reference key="1">
    <citation type="journal article" date="2000" name="Nature">
        <title>Complete genome sequence of Pseudomonas aeruginosa PAO1, an opportunistic pathogen.</title>
        <authorList>
            <person name="Stover C.K."/>
            <person name="Pham X.-Q.T."/>
            <person name="Erwin A.L."/>
            <person name="Mizoguchi S.D."/>
            <person name="Warrener P."/>
            <person name="Hickey M.J."/>
            <person name="Brinkman F.S.L."/>
            <person name="Hufnagle W.O."/>
            <person name="Kowalik D.J."/>
            <person name="Lagrou M."/>
            <person name="Garber R.L."/>
            <person name="Goltry L."/>
            <person name="Tolentino E."/>
            <person name="Westbrock-Wadman S."/>
            <person name="Yuan Y."/>
            <person name="Brody L.L."/>
            <person name="Coulter S.N."/>
            <person name="Folger K.R."/>
            <person name="Kas A."/>
            <person name="Larbig K."/>
            <person name="Lim R.M."/>
            <person name="Smith K.A."/>
            <person name="Spencer D.H."/>
            <person name="Wong G.K.-S."/>
            <person name="Wu Z."/>
            <person name="Paulsen I.T."/>
            <person name="Reizer J."/>
            <person name="Saier M.H. Jr."/>
            <person name="Hancock R.E.W."/>
            <person name="Lory S."/>
            <person name="Olson M.V."/>
        </authorList>
    </citation>
    <scope>NUCLEOTIDE SEQUENCE [LARGE SCALE GENOMIC DNA]</scope>
    <source>
        <strain>ATCC 15692 / DSM 22644 / CIP 104116 / JCM 14847 / LMG 12228 / 1C / PRS 101 / PAO1</strain>
    </source>
</reference>